<organism>
    <name type="scientific">Thioalkalivibrio sulfidiphilus (strain HL-EbGR7)</name>
    <dbReference type="NCBI Taxonomy" id="396588"/>
    <lineage>
        <taxon>Bacteria</taxon>
        <taxon>Pseudomonadati</taxon>
        <taxon>Pseudomonadota</taxon>
        <taxon>Gammaproteobacteria</taxon>
        <taxon>Chromatiales</taxon>
        <taxon>Ectothiorhodospiraceae</taxon>
        <taxon>Thioalkalivibrio</taxon>
    </lineage>
</organism>
<sequence length="459" mass="49777">MSAGNIVEIIGAVVDVEFPRDAVPNVYDALRVEDSGLTLEVQQQLGDGVVRTIAMGSTDGMRRGVTVANTGAPISVPVGKGTLGRVMDVLGNPVDNAGDVQTEERWSIHRPAPSFDEQAGSTELLETGIKVIDLLCPFAKGGKVGLFGGAGVGKTVNMMELIRNIAIEHSGYSVFAGVGERTREGNDFYHEMKDSNVLDKVALVYGQMNEPPGNRLRVALTGLTMAEFFRDEGRDVLMFIDNIYRYTLAGTEVSALLGRMPSAVGYQPTLAEEMGVLQERITSTKKGSITSIQAVYVPADDLTDPSPATTFAHLDATVVLSRQIAELGIYPAVDPLDSTSRQLDPQVIGNEHYDTARAVQNTLQRYKELKDIIAILGMDELSEDDKLIVARARKIQRFLSQPFFVAEVFTGAPGKYVSLKDTIRGFQAIVAGEYDHLPEQAFYMVGTIDEAVEKAGKLK</sequence>
<feature type="chain" id="PRO_1000166612" description="ATP synthase subunit beta">
    <location>
        <begin position="1"/>
        <end position="459"/>
    </location>
</feature>
<feature type="binding site" evidence="1">
    <location>
        <begin position="148"/>
        <end position="155"/>
    </location>
    <ligand>
        <name>ATP</name>
        <dbReference type="ChEBI" id="CHEBI:30616"/>
    </ligand>
</feature>
<dbReference type="EC" id="7.1.2.2" evidence="1"/>
<dbReference type="EMBL" id="CP001339">
    <property type="protein sequence ID" value="ACL74372.1"/>
    <property type="molecule type" value="Genomic_DNA"/>
</dbReference>
<dbReference type="RefSeq" id="WP_012639834.1">
    <property type="nucleotide sequence ID" value="NC_011901.1"/>
</dbReference>
<dbReference type="SMR" id="B8GRB8"/>
<dbReference type="STRING" id="396588.Tgr7_3305"/>
<dbReference type="KEGG" id="tgr:Tgr7_3305"/>
<dbReference type="eggNOG" id="COG0055">
    <property type="taxonomic scope" value="Bacteria"/>
</dbReference>
<dbReference type="HOGENOM" id="CLU_022398_0_2_6"/>
<dbReference type="OrthoDB" id="9801639at2"/>
<dbReference type="Proteomes" id="UP000002383">
    <property type="component" value="Chromosome"/>
</dbReference>
<dbReference type="GO" id="GO:0005886">
    <property type="term" value="C:plasma membrane"/>
    <property type="evidence" value="ECO:0007669"/>
    <property type="project" value="UniProtKB-SubCell"/>
</dbReference>
<dbReference type="GO" id="GO:0045259">
    <property type="term" value="C:proton-transporting ATP synthase complex"/>
    <property type="evidence" value="ECO:0007669"/>
    <property type="project" value="UniProtKB-KW"/>
</dbReference>
<dbReference type="GO" id="GO:0005524">
    <property type="term" value="F:ATP binding"/>
    <property type="evidence" value="ECO:0007669"/>
    <property type="project" value="UniProtKB-UniRule"/>
</dbReference>
<dbReference type="GO" id="GO:0016887">
    <property type="term" value="F:ATP hydrolysis activity"/>
    <property type="evidence" value="ECO:0007669"/>
    <property type="project" value="InterPro"/>
</dbReference>
<dbReference type="GO" id="GO:0046933">
    <property type="term" value="F:proton-transporting ATP synthase activity, rotational mechanism"/>
    <property type="evidence" value="ECO:0007669"/>
    <property type="project" value="UniProtKB-UniRule"/>
</dbReference>
<dbReference type="CDD" id="cd18110">
    <property type="entry name" value="ATP-synt_F1_beta_C"/>
    <property type="match status" value="1"/>
</dbReference>
<dbReference type="CDD" id="cd18115">
    <property type="entry name" value="ATP-synt_F1_beta_N"/>
    <property type="match status" value="1"/>
</dbReference>
<dbReference type="CDD" id="cd01133">
    <property type="entry name" value="F1-ATPase_beta_CD"/>
    <property type="match status" value="1"/>
</dbReference>
<dbReference type="FunFam" id="1.10.1140.10:FF:000001">
    <property type="entry name" value="ATP synthase subunit beta"/>
    <property type="match status" value="1"/>
</dbReference>
<dbReference type="FunFam" id="3.40.50.300:FF:000004">
    <property type="entry name" value="ATP synthase subunit beta"/>
    <property type="match status" value="1"/>
</dbReference>
<dbReference type="Gene3D" id="2.40.10.170">
    <property type="match status" value="1"/>
</dbReference>
<dbReference type="Gene3D" id="1.10.1140.10">
    <property type="entry name" value="Bovine Mitochondrial F1-atpase, Atp Synthase Beta Chain, Chain D, domain 3"/>
    <property type="match status" value="1"/>
</dbReference>
<dbReference type="Gene3D" id="3.40.50.300">
    <property type="entry name" value="P-loop containing nucleotide triphosphate hydrolases"/>
    <property type="match status" value="1"/>
</dbReference>
<dbReference type="HAMAP" id="MF_01347">
    <property type="entry name" value="ATP_synth_beta_bact"/>
    <property type="match status" value="1"/>
</dbReference>
<dbReference type="InterPro" id="IPR003593">
    <property type="entry name" value="AAA+_ATPase"/>
</dbReference>
<dbReference type="InterPro" id="IPR055190">
    <property type="entry name" value="ATP-synt_VA_C"/>
</dbReference>
<dbReference type="InterPro" id="IPR005722">
    <property type="entry name" value="ATP_synth_F1_bsu"/>
</dbReference>
<dbReference type="InterPro" id="IPR020003">
    <property type="entry name" value="ATPase_a/bsu_AS"/>
</dbReference>
<dbReference type="InterPro" id="IPR050053">
    <property type="entry name" value="ATPase_alpha/beta_chains"/>
</dbReference>
<dbReference type="InterPro" id="IPR004100">
    <property type="entry name" value="ATPase_F1/V1/A1_a/bsu_N"/>
</dbReference>
<dbReference type="InterPro" id="IPR036121">
    <property type="entry name" value="ATPase_F1/V1/A1_a/bsu_N_sf"/>
</dbReference>
<dbReference type="InterPro" id="IPR000194">
    <property type="entry name" value="ATPase_F1/V1/A1_a/bsu_nucl-bd"/>
</dbReference>
<dbReference type="InterPro" id="IPR024034">
    <property type="entry name" value="ATPase_F1/V1_b/a_C"/>
</dbReference>
<dbReference type="InterPro" id="IPR027417">
    <property type="entry name" value="P-loop_NTPase"/>
</dbReference>
<dbReference type="NCBIfam" id="TIGR01039">
    <property type="entry name" value="atpD"/>
    <property type="match status" value="1"/>
</dbReference>
<dbReference type="PANTHER" id="PTHR15184">
    <property type="entry name" value="ATP SYNTHASE"/>
    <property type="match status" value="1"/>
</dbReference>
<dbReference type="PANTHER" id="PTHR15184:SF71">
    <property type="entry name" value="ATP SYNTHASE SUBUNIT BETA, MITOCHONDRIAL"/>
    <property type="match status" value="1"/>
</dbReference>
<dbReference type="Pfam" id="PF00006">
    <property type="entry name" value="ATP-synt_ab"/>
    <property type="match status" value="1"/>
</dbReference>
<dbReference type="Pfam" id="PF02874">
    <property type="entry name" value="ATP-synt_ab_N"/>
    <property type="match status" value="1"/>
</dbReference>
<dbReference type="Pfam" id="PF22919">
    <property type="entry name" value="ATP-synt_VA_C"/>
    <property type="match status" value="1"/>
</dbReference>
<dbReference type="SMART" id="SM00382">
    <property type="entry name" value="AAA"/>
    <property type="match status" value="1"/>
</dbReference>
<dbReference type="SUPFAM" id="SSF47917">
    <property type="entry name" value="C-terminal domain of alpha and beta subunits of F1 ATP synthase"/>
    <property type="match status" value="1"/>
</dbReference>
<dbReference type="SUPFAM" id="SSF50615">
    <property type="entry name" value="N-terminal domain of alpha and beta subunits of F1 ATP synthase"/>
    <property type="match status" value="1"/>
</dbReference>
<dbReference type="SUPFAM" id="SSF52540">
    <property type="entry name" value="P-loop containing nucleoside triphosphate hydrolases"/>
    <property type="match status" value="1"/>
</dbReference>
<dbReference type="PROSITE" id="PS00152">
    <property type="entry name" value="ATPASE_ALPHA_BETA"/>
    <property type="match status" value="1"/>
</dbReference>
<keyword id="KW-0066">ATP synthesis</keyword>
<keyword id="KW-0067">ATP-binding</keyword>
<keyword id="KW-0997">Cell inner membrane</keyword>
<keyword id="KW-1003">Cell membrane</keyword>
<keyword id="KW-0139">CF(1)</keyword>
<keyword id="KW-0375">Hydrogen ion transport</keyword>
<keyword id="KW-0406">Ion transport</keyword>
<keyword id="KW-0472">Membrane</keyword>
<keyword id="KW-0547">Nucleotide-binding</keyword>
<keyword id="KW-1185">Reference proteome</keyword>
<keyword id="KW-1278">Translocase</keyword>
<keyword id="KW-0813">Transport</keyword>
<comment type="function">
    <text evidence="1">Produces ATP from ADP in the presence of a proton gradient across the membrane. The catalytic sites are hosted primarily by the beta subunits.</text>
</comment>
<comment type="catalytic activity">
    <reaction evidence="1">
        <text>ATP + H2O + 4 H(+)(in) = ADP + phosphate + 5 H(+)(out)</text>
        <dbReference type="Rhea" id="RHEA:57720"/>
        <dbReference type="ChEBI" id="CHEBI:15377"/>
        <dbReference type="ChEBI" id="CHEBI:15378"/>
        <dbReference type="ChEBI" id="CHEBI:30616"/>
        <dbReference type="ChEBI" id="CHEBI:43474"/>
        <dbReference type="ChEBI" id="CHEBI:456216"/>
        <dbReference type="EC" id="7.1.2.2"/>
    </reaction>
</comment>
<comment type="subunit">
    <text evidence="1">F-type ATPases have 2 components, CF(1) - the catalytic core - and CF(0) - the membrane proton channel. CF(1) has five subunits: alpha(3), beta(3), gamma(1), delta(1), epsilon(1). CF(0) has three main subunits: a(1), b(2) and c(9-12). The alpha and beta chains form an alternating ring which encloses part of the gamma chain. CF(1) is attached to CF(0) by a central stalk formed by the gamma and epsilon chains, while a peripheral stalk is formed by the delta and b chains.</text>
</comment>
<comment type="subcellular location">
    <subcellularLocation>
        <location evidence="1">Cell inner membrane</location>
        <topology evidence="1">Peripheral membrane protein</topology>
    </subcellularLocation>
</comment>
<comment type="similarity">
    <text evidence="1">Belongs to the ATPase alpha/beta chains family.</text>
</comment>
<evidence type="ECO:0000255" key="1">
    <source>
        <dbReference type="HAMAP-Rule" id="MF_01347"/>
    </source>
</evidence>
<accession>B8GRB8</accession>
<protein>
    <recommendedName>
        <fullName evidence="1">ATP synthase subunit beta</fullName>
        <ecNumber evidence="1">7.1.2.2</ecNumber>
    </recommendedName>
    <alternativeName>
        <fullName evidence="1">ATP synthase F1 sector subunit beta</fullName>
    </alternativeName>
    <alternativeName>
        <fullName evidence="1">F-ATPase subunit beta</fullName>
    </alternativeName>
</protein>
<reference key="1">
    <citation type="journal article" date="2011" name="Stand. Genomic Sci.">
        <title>Complete genome sequence of 'Thioalkalivibrio sulfidophilus' HL-EbGr7.</title>
        <authorList>
            <person name="Muyzer G."/>
            <person name="Sorokin D.Y."/>
            <person name="Mavromatis K."/>
            <person name="Lapidus A."/>
            <person name="Clum A."/>
            <person name="Ivanova N."/>
            <person name="Pati A."/>
            <person name="d'Haeseleer P."/>
            <person name="Woyke T."/>
            <person name="Kyrpides N.C."/>
        </authorList>
    </citation>
    <scope>NUCLEOTIDE SEQUENCE [LARGE SCALE GENOMIC DNA]</scope>
    <source>
        <strain>HL-EbGR7</strain>
    </source>
</reference>
<gene>
    <name evidence="1" type="primary">atpD</name>
    <name type="ordered locus">Tgr7_3305</name>
</gene>
<proteinExistence type="inferred from homology"/>
<name>ATPB_THISH</name>